<protein>
    <recommendedName>
        <fullName evidence="1">Adenine phosphoribosyltransferase</fullName>
        <shortName evidence="1">APRT</shortName>
        <ecNumber evidence="1">2.4.2.7</ecNumber>
    </recommendedName>
</protein>
<feature type="chain" id="PRO_0000149378" description="Adenine phosphoribosyltransferase">
    <location>
        <begin position="1"/>
        <end position="185"/>
    </location>
</feature>
<sequence>MSEQALSTFDRAREALDKKTRYVQDFPEKGVLFEDLTPVLGDAESFVAVVDAMAEAAEKLNAEIIGGLDARGFLLGSAVAYKLGLGVLAIRKKGKLPPPVVTQEYELEYGTAALELPSEGIDIAGKNIVLIDDVLATGGTLGAARKLIESCDGHVSGYVLAIEVPGLGGRDNLGDRPVIVVRDPQ</sequence>
<comment type="function">
    <text evidence="1">Catalyzes a salvage reaction resulting in the formation of AMP, that is energically less costly than de novo synthesis.</text>
</comment>
<comment type="catalytic activity">
    <reaction evidence="1">
        <text>AMP + diphosphate = 5-phospho-alpha-D-ribose 1-diphosphate + adenine</text>
        <dbReference type="Rhea" id="RHEA:16609"/>
        <dbReference type="ChEBI" id="CHEBI:16708"/>
        <dbReference type="ChEBI" id="CHEBI:33019"/>
        <dbReference type="ChEBI" id="CHEBI:58017"/>
        <dbReference type="ChEBI" id="CHEBI:456215"/>
        <dbReference type="EC" id="2.4.2.7"/>
    </reaction>
</comment>
<comment type="pathway">
    <text evidence="1">Purine metabolism; AMP biosynthesis via salvage pathway; AMP from adenine: step 1/1.</text>
</comment>
<comment type="subunit">
    <text evidence="1">Homodimer.</text>
</comment>
<comment type="subcellular location">
    <subcellularLocation>
        <location evidence="1">Cytoplasm</location>
    </subcellularLocation>
</comment>
<comment type="similarity">
    <text evidence="1">Belongs to the purine/pyrimidine phosphoribosyltransferase family.</text>
</comment>
<name>APT_CORGL</name>
<organism>
    <name type="scientific">Corynebacterium glutamicum (strain ATCC 13032 / DSM 20300 / JCM 1318 / BCRC 11384 / CCUG 27702 / LMG 3730 / NBRC 12168 / NCIMB 10025 / NRRL B-2784 / 534)</name>
    <dbReference type="NCBI Taxonomy" id="196627"/>
    <lineage>
        <taxon>Bacteria</taxon>
        <taxon>Bacillati</taxon>
        <taxon>Actinomycetota</taxon>
        <taxon>Actinomycetes</taxon>
        <taxon>Mycobacteriales</taxon>
        <taxon>Corynebacteriaceae</taxon>
        <taxon>Corynebacterium</taxon>
    </lineage>
</organism>
<proteinExistence type="inferred from homology"/>
<evidence type="ECO:0000255" key="1">
    <source>
        <dbReference type="HAMAP-Rule" id="MF_00004"/>
    </source>
</evidence>
<dbReference type="EC" id="2.4.2.7" evidence="1"/>
<dbReference type="EMBL" id="AF038651">
    <property type="protein sequence ID" value="AAC35493.1"/>
    <property type="molecule type" value="Genomic_DNA"/>
</dbReference>
<dbReference type="EMBL" id="BA000036">
    <property type="protein sequence ID" value="BAB99047.1"/>
    <property type="molecule type" value="Genomic_DNA"/>
</dbReference>
<dbReference type="EMBL" id="BX927153">
    <property type="protein sequence ID" value="CAF20037.1"/>
    <property type="molecule type" value="Genomic_DNA"/>
</dbReference>
<dbReference type="RefSeq" id="NP_600867.1">
    <property type="nucleotide sequence ID" value="NC_003450.3"/>
</dbReference>
<dbReference type="RefSeq" id="WP_011014514.1">
    <property type="nucleotide sequence ID" value="NC_006958.1"/>
</dbReference>
<dbReference type="SMR" id="O87330"/>
<dbReference type="STRING" id="196627.cg1862"/>
<dbReference type="KEGG" id="cgb:cg1862"/>
<dbReference type="KEGG" id="cgl:Cgl1654"/>
<dbReference type="PATRIC" id="fig|196627.13.peg.1615"/>
<dbReference type="eggNOG" id="COG0503">
    <property type="taxonomic scope" value="Bacteria"/>
</dbReference>
<dbReference type="HOGENOM" id="CLU_063339_3_3_11"/>
<dbReference type="OrthoDB" id="9803963at2"/>
<dbReference type="BioCyc" id="CORYNE:G18NG-11239-MONOMER"/>
<dbReference type="UniPathway" id="UPA00588">
    <property type="reaction ID" value="UER00646"/>
</dbReference>
<dbReference type="Proteomes" id="UP000000582">
    <property type="component" value="Chromosome"/>
</dbReference>
<dbReference type="Proteomes" id="UP000001009">
    <property type="component" value="Chromosome"/>
</dbReference>
<dbReference type="GO" id="GO:0005737">
    <property type="term" value="C:cytoplasm"/>
    <property type="evidence" value="ECO:0007669"/>
    <property type="project" value="UniProtKB-SubCell"/>
</dbReference>
<dbReference type="GO" id="GO:0002055">
    <property type="term" value="F:adenine binding"/>
    <property type="evidence" value="ECO:0007669"/>
    <property type="project" value="TreeGrafter"/>
</dbReference>
<dbReference type="GO" id="GO:0003999">
    <property type="term" value="F:adenine phosphoribosyltransferase activity"/>
    <property type="evidence" value="ECO:0007669"/>
    <property type="project" value="UniProtKB-UniRule"/>
</dbReference>
<dbReference type="GO" id="GO:0016208">
    <property type="term" value="F:AMP binding"/>
    <property type="evidence" value="ECO:0007669"/>
    <property type="project" value="TreeGrafter"/>
</dbReference>
<dbReference type="GO" id="GO:0006168">
    <property type="term" value="P:adenine salvage"/>
    <property type="evidence" value="ECO:0007669"/>
    <property type="project" value="InterPro"/>
</dbReference>
<dbReference type="GO" id="GO:0044209">
    <property type="term" value="P:AMP salvage"/>
    <property type="evidence" value="ECO:0007669"/>
    <property type="project" value="UniProtKB-UniRule"/>
</dbReference>
<dbReference type="GO" id="GO:0006166">
    <property type="term" value="P:purine ribonucleoside salvage"/>
    <property type="evidence" value="ECO:0007669"/>
    <property type="project" value="UniProtKB-KW"/>
</dbReference>
<dbReference type="CDD" id="cd06223">
    <property type="entry name" value="PRTases_typeI"/>
    <property type="match status" value="1"/>
</dbReference>
<dbReference type="FunFam" id="3.40.50.2020:FF:000021">
    <property type="entry name" value="Adenine phosphoribosyltransferase"/>
    <property type="match status" value="1"/>
</dbReference>
<dbReference type="Gene3D" id="3.40.50.2020">
    <property type="match status" value="1"/>
</dbReference>
<dbReference type="HAMAP" id="MF_00004">
    <property type="entry name" value="Aden_phosphoribosyltr"/>
    <property type="match status" value="1"/>
</dbReference>
<dbReference type="InterPro" id="IPR005764">
    <property type="entry name" value="Ade_phspho_trans"/>
</dbReference>
<dbReference type="InterPro" id="IPR000836">
    <property type="entry name" value="PRibTrfase_dom"/>
</dbReference>
<dbReference type="InterPro" id="IPR029057">
    <property type="entry name" value="PRTase-like"/>
</dbReference>
<dbReference type="InterPro" id="IPR050054">
    <property type="entry name" value="UPRTase/APRTase"/>
</dbReference>
<dbReference type="NCBIfam" id="NF002634">
    <property type="entry name" value="PRK02304.1-3"/>
    <property type="match status" value="1"/>
</dbReference>
<dbReference type="NCBIfam" id="NF002636">
    <property type="entry name" value="PRK02304.1-5"/>
    <property type="match status" value="1"/>
</dbReference>
<dbReference type="PANTHER" id="PTHR32315">
    <property type="entry name" value="ADENINE PHOSPHORIBOSYLTRANSFERASE"/>
    <property type="match status" value="1"/>
</dbReference>
<dbReference type="PANTHER" id="PTHR32315:SF3">
    <property type="entry name" value="ADENINE PHOSPHORIBOSYLTRANSFERASE"/>
    <property type="match status" value="1"/>
</dbReference>
<dbReference type="Pfam" id="PF00156">
    <property type="entry name" value="Pribosyltran"/>
    <property type="match status" value="1"/>
</dbReference>
<dbReference type="SUPFAM" id="SSF53271">
    <property type="entry name" value="PRTase-like"/>
    <property type="match status" value="1"/>
</dbReference>
<dbReference type="PROSITE" id="PS00103">
    <property type="entry name" value="PUR_PYR_PR_TRANSFER"/>
    <property type="match status" value="1"/>
</dbReference>
<accession>O87330</accession>
<reference key="1">
    <citation type="journal article" date="1998" name="Microbiology">
        <title>The role of the Corynebacterium glutamicum rel gene in (p)ppGpp metabolism.</title>
        <authorList>
            <person name="Wehmeier L."/>
            <person name="Schaefer A."/>
            <person name="Burkovski A."/>
            <person name="Kraemer R."/>
            <person name="Mechold U."/>
            <person name="Malke H."/>
            <person name="Puehler A."/>
            <person name="Kalinowski J."/>
        </authorList>
    </citation>
    <scope>NUCLEOTIDE SEQUENCE [GENOMIC DNA]</scope>
    <source>
        <strain>ATCC 13032 / DSM 20300 / JCM 1318 / BCRC 11384 / CCUG 27702 / LMG 3730 / NBRC 12168 / NCIMB 10025 / NRRL B-2784 / 534</strain>
    </source>
</reference>
<reference key="2">
    <citation type="journal article" date="2003" name="Appl. Microbiol. Biotechnol.">
        <title>The Corynebacterium glutamicum genome: features and impacts on biotechnological processes.</title>
        <authorList>
            <person name="Ikeda M."/>
            <person name="Nakagawa S."/>
        </authorList>
    </citation>
    <scope>NUCLEOTIDE SEQUENCE [LARGE SCALE GENOMIC DNA]</scope>
    <source>
        <strain>ATCC 13032 / DSM 20300 / JCM 1318 / BCRC 11384 / CCUG 27702 / LMG 3730 / NBRC 12168 / NCIMB 10025 / NRRL B-2784 / 534</strain>
    </source>
</reference>
<reference key="3">
    <citation type="journal article" date="2003" name="J. Biotechnol.">
        <title>The complete Corynebacterium glutamicum ATCC 13032 genome sequence and its impact on the production of L-aspartate-derived amino acids and vitamins.</title>
        <authorList>
            <person name="Kalinowski J."/>
            <person name="Bathe B."/>
            <person name="Bartels D."/>
            <person name="Bischoff N."/>
            <person name="Bott M."/>
            <person name="Burkovski A."/>
            <person name="Dusch N."/>
            <person name="Eggeling L."/>
            <person name="Eikmanns B.J."/>
            <person name="Gaigalat L."/>
            <person name="Goesmann A."/>
            <person name="Hartmann M."/>
            <person name="Huthmacher K."/>
            <person name="Kraemer R."/>
            <person name="Linke B."/>
            <person name="McHardy A.C."/>
            <person name="Meyer F."/>
            <person name="Moeckel B."/>
            <person name="Pfefferle W."/>
            <person name="Puehler A."/>
            <person name="Rey D.A."/>
            <person name="Rueckert C."/>
            <person name="Rupp O."/>
            <person name="Sahm H."/>
            <person name="Wendisch V.F."/>
            <person name="Wiegraebe I."/>
            <person name="Tauch A."/>
        </authorList>
    </citation>
    <scope>NUCLEOTIDE SEQUENCE [LARGE SCALE GENOMIC DNA]</scope>
    <source>
        <strain>ATCC 13032 / DSM 20300 / JCM 1318 / BCRC 11384 / CCUG 27702 / LMG 3730 / NBRC 12168 / NCIMB 10025 / NRRL B-2784 / 534</strain>
    </source>
</reference>
<gene>
    <name evidence="1" type="primary">apt</name>
    <name type="ordered locus">Cgl1654</name>
    <name type="ordered locus">cg1862</name>
</gene>
<keyword id="KW-0963">Cytoplasm</keyword>
<keyword id="KW-0328">Glycosyltransferase</keyword>
<keyword id="KW-0660">Purine salvage</keyword>
<keyword id="KW-1185">Reference proteome</keyword>
<keyword id="KW-0808">Transferase</keyword>